<evidence type="ECO:0000255" key="1">
    <source>
        <dbReference type="HAMAP-Rule" id="MF_01322"/>
    </source>
</evidence>
<proteinExistence type="inferred from homology"/>
<dbReference type="EC" id="2.7.7.6" evidence="1"/>
<dbReference type="EMBL" id="CP000911">
    <property type="protein sequence ID" value="ABY38341.1"/>
    <property type="molecule type" value="Genomic_DNA"/>
</dbReference>
<dbReference type="RefSeq" id="WP_006070959.1">
    <property type="nucleotide sequence ID" value="NC_010169.1"/>
</dbReference>
<dbReference type="SMR" id="B0CH40"/>
<dbReference type="KEGG" id="bmt:BSUIS_A1290"/>
<dbReference type="HOGENOM" id="CLU_000524_3_1_5"/>
<dbReference type="Proteomes" id="UP000008545">
    <property type="component" value="Chromosome I"/>
</dbReference>
<dbReference type="GO" id="GO:0000428">
    <property type="term" value="C:DNA-directed RNA polymerase complex"/>
    <property type="evidence" value="ECO:0007669"/>
    <property type="project" value="UniProtKB-KW"/>
</dbReference>
<dbReference type="GO" id="GO:0003677">
    <property type="term" value="F:DNA binding"/>
    <property type="evidence" value="ECO:0007669"/>
    <property type="project" value="UniProtKB-UniRule"/>
</dbReference>
<dbReference type="GO" id="GO:0003899">
    <property type="term" value="F:DNA-directed RNA polymerase activity"/>
    <property type="evidence" value="ECO:0007669"/>
    <property type="project" value="UniProtKB-UniRule"/>
</dbReference>
<dbReference type="GO" id="GO:0000287">
    <property type="term" value="F:magnesium ion binding"/>
    <property type="evidence" value="ECO:0007669"/>
    <property type="project" value="UniProtKB-UniRule"/>
</dbReference>
<dbReference type="GO" id="GO:0008270">
    <property type="term" value="F:zinc ion binding"/>
    <property type="evidence" value="ECO:0007669"/>
    <property type="project" value="UniProtKB-UniRule"/>
</dbReference>
<dbReference type="GO" id="GO:0006351">
    <property type="term" value="P:DNA-templated transcription"/>
    <property type="evidence" value="ECO:0007669"/>
    <property type="project" value="UniProtKB-UniRule"/>
</dbReference>
<dbReference type="CDD" id="cd02655">
    <property type="entry name" value="RNAP_beta'_C"/>
    <property type="match status" value="1"/>
</dbReference>
<dbReference type="CDD" id="cd01609">
    <property type="entry name" value="RNAP_beta'_N"/>
    <property type="match status" value="1"/>
</dbReference>
<dbReference type="FunFam" id="4.10.860.120:FF:000001">
    <property type="entry name" value="DNA-directed RNA polymerase subunit beta"/>
    <property type="match status" value="1"/>
</dbReference>
<dbReference type="Gene3D" id="1.10.132.30">
    <property type="match status" value="1"/>
</dbReference>
<dbReference type="Gene3D" id="1.10.150.390">
    <property type="match status" value="1"/>
</dbReference>
<dbReference type="Gene3D" id="1.10.1790.20">
    <property type="match status" value="1"/>
</dbReference>
<dbReference type="Gene3D" id="1.10.40.90">
    <property type="match status" value="1"/>
</dbReference>
<dbReference type="Gene3D" id="2.40.40.20">
    <property type="match status" value="1"/>
</dbReference>
<dbReference type="Gene3D" id="2.40.50.100">
    <property type="match status" value="3"/>
</dbReference>
<dbReference type="Gene3D" id="4.10.860.120">
    <property type="entry name" value="RNA polymerase II, clamp domain"/>
    <property type="match status" value="1"/>
</dbReference>
<dbReference type="Gene3D" id="1.10.274.100">
    <property type="entry name" value="RNA polymerase Rpb1, domain 3"/>
    <property type="match status" value="1"/>
</dbReference>
<dbReference type="HAMAP" id="MF_01322">
    <property type="entry name" value="RNApol_bact_RpoC"/>
    <property type="match status" value="1"/>
</dbReference>
<dbReference type="InterPro" id="IPR045867">
    <property type="entry name" value="DNA-dir_RpoC_beta_prime"/>
</dbReference>
<dbReference type="InterPro" id="IPR012754">
    <property type="entry name" value="DNA-dir_RpoC_beta_prime_bact"/>
</dbReference>
<dbReference type="InterPro" id="IPR000722">
    <property type="entry name" value="RNA_pol_asu"/>
</dbReference>
<dbReference type="InterPro" id="IPR006592">
    <property type="entry name" value="RNA_pol_N"/>
</dbReference>
<dbReference type="InterPro" id="IPR007080">
    <property type="entry name" value="RNA_pol_Rpb1_1"/>
</dbReference>
<dbReference type="InterPro" id="IPR007066">
    <property type="entry name" value="RNA_pol_Rpb1_3"/>
</dbReference>
<dbReference type="InterPro" id="IPR042102">
    <property type="entry name" value="RNA_pol_Rpb1_3_sf"/>
</dbReference>
<dbReference type="InterPro" id="IPR007083">
    <property type="entry name" value="RNA_pol_Rpb1_4"/>
</dbReference>
<dbReference type="InterPro" id="IPR007081">
    <property type="entry name" value="RNA_pol_Rpb1_5"/>
</dbReference>
<dbReference type="InterPro" id="IPR044893">
    <property type="entry name" value="RNA_pol_Rpb1_clamp_domain"/>
</dbReference>
<dbReference type="InterPro" id="IPR038120">
    <property type="entry name" value="Rpb1_funnel_sf"/>
</dbReference>
<dbReference type="NCBIfam" id="TIGR02386">
    <property type="entry name" value="rpoC_TIGR"/>
    <property type="match status" value="1"/>
</dbReference>
<dbReference type="PANTHER" id="PTHR19376">
    <property type="entry name" value="DNA-DIRECTED RNA POLYMERASE"/>
    <property type="match status" value="1"/>
</dbReference>
<dbReference type="PANTHER" id="PTHR19376:SF54">
    <property type="entry name" value="DNA-DIRECTED RNA POLYMERASE SUBUNIT BETA"/>
    <property type="match status" value="1"/>
</dbReference>
<dbReference type="Pfam" id="PF04997">
    <property type="entry name" value="RNA_pol_Rpb1_1"/>
    <property type="match status" value="1"/>
</dbReference>
<dbReference type="Pfam" id="PF00623">
    <property type="entry name" value="RNA_pol_Rpb1_2"/>
    <property type="match status" value="1"/>
</dbReference>
<dbReference type="Pfam" id="PF04983">
    <property type="entry name" value="RNA_pol_Rpb1_3"/>
    <property type="match status" value="1"/>
</dbReference>
<dbReference type="Pfam" id="PF05000">
    <property type="entry name" value="RNA_pol_Rpb1_4"/>
    <property type="match status" value="1"/>
</dbReference>
<dbReference type="Pfam" id="PF04998">
    <property type="entry name" value="RNA_pol_Rpb1_5"/>
    <property type="match status" value="1"/>
</dbReference>
<dbReference type="SMART" id="SM00663">
    <property type="entry name" value="RPOLA_N"/>
    <property type="match status" value="1"/>
</dbReference>
<dbReference type="SUPFAM" id="SSF64484">
    <property type="entry name" value="beta and beta-prime subunits of DNA dependent RNA-polymerase"/>
    <property type="match status" value="1"/>
</dbReference>
<name>RPOC_BRUSI</name>
<comment type="function">
    <text evidence="1">DNA-dependent RNA polymerase catalyzes the transcription of DNA into RNA using the four ribonucleoside triphosphates as substrates.</text>
</comment>
<comment type="catalytic activity">
    <reaction evidence="1">
        <text>RNA(n) + a ribonucleoside 5'-triphosphate = RNA(n+1) + diphosphate</text>
        <dbReference type="Rhea" id="RHEA:21248"/>
        <dbReference type="Rhea" id="RHEA-COMP:14527"/>
        <dbReference type="Rhea" id="RHEA-COMP:17342"/>
        <dbReference type="ChEBI" id="CHEBI:33019"/>
        <dbReference type="ChEBI" id="CHEBI:61557"/>
        <dbReference type="ChEBI" id="CHEBI:140395"/>
        <dbReference type="EC" id="2.7.7.6"/>
    </reaction>
</comment>
<comment type="cofactor">
    <cofactor evidence="1">
        <name>Mg(2+)</name>
        <dbReference type="ChEBI" id="CHEBI:18420"/>
    </cofactor>
    <text evidence="1">Binds 1 Mg(2+) ion per subunit.</text>
</comment>
<comment type="cofactor">
    <cofactor evidence="1">
        <name>Zn(2+)</name>
        <dbReference type="ChEBI" id="CHEBI:29105"/>
    </cofactor>
    <text evidence="1">Binds 2 Zn(2+) ions per subunit.</text>
</comment>
<comment type="subunit">
    <text evidence="1">The RNAP catalytic core consists of 2 alpha, 1 beta, 1 beta' and 1 omega subunit. When a sigma factor is associated with the core the holoenzyme is formed, which can initiate transcription.</text>
</comment>
<comment type="similarity">
    <text evidence="1">Belongs to the RNA polymerase beta' chain family.</text>
</comment>
<sequence>MNQEVMNLFNPQAPAQTFDSIRISIASPEKILSWSYGEIKKPETINYRTFKPERDGLFCARIFGPIKDYECLCGKYKRMKYKGIICEKCGVEVTLSRVRRERMGHIELAAPVAHIWFLKSLPSRIGTLLDMTLKDIERVLYFENYIVTEPGLTSLKEHQLLSEEEYMIAVDEFGEDQFTALIGAEAIYELLASMELEKIAADLRVDLAETTSDLKQKKLMKRLKIVENFLESGNRPEWMIMKIVPVIPPDLRPLVPLDGGRFATSDLNDLYRRVINRNNRLKRLIELRAPGIIIRNEKRMLQEAVDALFDNGRRGRVITGANKRPLKSLSDMLKGKQGRFRQNLLGKRVDYSGRSVIVTGPELKLHQCGLPKKMALELFKPFIYARLDAKGYSSTVKQAKKLVEKERPEVWDILDEVIREHPVLLNRAPTLHRLGIQAFEPTLIEGKAIQLHPLVCTAFNADFDGDQMAVHVPLSLEAQLEARVLMMSTNNILHPANGAPIIVPSQDMVLGLYYLSIVAEKEPGEGMIFADMGELQHALENKVVTLHTKIKGRFKTVDAEGNPVSKIYDTTPGRMIMGELLPKNVNVPFDICNQEMTKKNISKMIDHVYRHCGQKETVIFCDRIMQLGFAHACRAGISFGKDDMVIPESKAKIVAETEALTTEYEQQYNDGLITQGEKYNKVVDAWGKATDKITEEMMARLKAVEFDPVTGRQKQMNSVYMMSHSGARGSVNQMRQLGGMRGLMAKPSGEIIETPIISNFKEGLTVNEYFNSTHGARKGLADTALKTANSGYLTRRLVDVAQDAIISEVDCGAEIGLTMQPIVDAGQIVASIGQRVLGRTALDPILHPVTGEVIVEAGRMIEEKDVEIIEKAGIQSIRIRSALTCETRDGVCAKCYGRDLARGTPVNQGEAVGVIAAQSIGEPGTQLTMRTFHLGGTAQVVDSSYLEASYEGTVKLRNRNVVRNSDGNLVVMGRNMAVLILDATGKERAVHRVTYGSRLFVDEGDTVKRGQRIAEWDPYTRPIMTEVEGYIEFEDLVDGLSVSETADESTGITKRVVIDWRSTPRGSDLKPAMVIKDKAGKILKLSKGGDARFLLSVESILSVEPGAHVKAGDVIARLPMESAKTKDITGGLPRVAELFEARRPKDHAIIAEIDGTVRFGRDYKNKRRIIIEPNDDTIEPVEYLIPKGKPFHLQDGDVIEKGEYILDGNPAPHDILAIKGVEALASYLVNEIQEVYRLQGVLINDKHIEVIVRQMLQKVEITESGDTGYIPGDHVDRIELEEINERLIEEGKKPGSGNPVLLGITKASLQTPSFISAASFQETTRVLTEAAVAGKMDTLQGLKENVIVGRLIPAGTGGMTNQIRRIATARDELIIDERRKTSGSAEANAMLVDMTNNAAE</sequence>
<protein>
    <recommendedName>
        <fullName evidence="1">DNA-directed RNA polymerase subunit beta'</fullName>
        <shortName evidence="1">RNAP subunit beta'</shortName>
        <ecNumber evidence="1">2.7.7.6</ecNumber>
    </recommendedName>
    <alternativeName>
        <fullName evidence="1">RNA polymerase subunit beta'</fullName>
    </alternativeName>
    <alternativeName>
        <fullName evidence="1">Transcriptase subunit beta'</fullName>
    </alternativeName>
</protein>
<keyword id="KW-0240">DNA-directed RNA polymerase</keyword>
<keyword id="KW-0460">Magnesium</keyword>
<keyword id="KW-0479">Metal-binding</keyword>
<keyword id="KW-0548">Nucleotidyltransferase</keyword>
<keyword id="KW-0804">Transcription</keyword>
<keyword id="KW-0808">Transferase</keyword>
<keyword id="KW-0862">Zinc</keyword>
<accession>B0CH40</accession>
<gene>
    <name evidence="1" type="primary">rpoC</name>
    <name type="ordered locus">BSUIS_A1290</name>
</gene>
<feature type="chain" id="PRO_1000086393" description="DNA-directed RNA polymerase subunit beta'">
    <location>
        <begin position="1"/>
        <end position="1400"/>
    </location>
</feature>
<feature type="binding site" evidence="1">
    <location>
        <position position="71"/>
    </location>
    <ligand>
        <name>Zn(2+)</name>
        <dbReference type="ChEBI" id="CHEBI:29105"/>
        <label>1</label>
    </ligand>
</feature>
<feature type="binding site" evidence="1">
    <location>
        <position position="73"/>
    </location>
    <ligand>
        <name>Zn(2+)</name>
        <dbReference type="ChEBI" id="CHEBI:29105"/>
        <label>1</label>
    </ligand>
</feature>
<feature type="binding site" evidence="1">
    <location>
        <position position="86"/>
    </location>
    <ligand>
        <name>Zn(2+)</name>
        <dbReference type="ChEBI" id="CHEBI:29105"/>
        <label>1</label>
    </ligand>
</feature>
<feature type="binding site" evidence="1">
    <location>
        <position position="89"/>
    </location>
    <ligand>
        <name>Zn(2+)</name>
        <dbReference type="ChEBI" id="CHEBI:29105"/>
        <label>1</label>
    </ligand>
</feature>
<feature type="binding site" evidence="1">
    <location>
        <position position="462"/>
    </location>
    <ligand>
        <name>Mg(2+)</name>
        <dbReference type="ChEBI" id="CHEBI:18420"/>
    </ligand>
</feature>
<feature type="binding site" evidence="1">
    <location>
        <position position="464"/>
    </location>
    <ligand>
        <name>Mg(2+)</name>
        <dbReference type="ChEBI" id="CHEBI:18420"/>
    </ligand>
</feature>
<feature type="binding site" evidence="1">
    <location>
        <position position="466"/>
    </location>
    <ligand>
        <name>Mg(2+)</name>
        <dbReference type="ChEBI" id="CHEBI:18420"/>
    </ligand>
</feature>
<feature type="binding site" evidence="1">
    <location>
        <position position="811"/>
    </location>
    <ligand>
        <name>Zn(2+)</name>
        <dbReference type="ChEBI" id="CHEBI:29105"/>
        <label>2</label>
    </ligand>
</feature>
<feature type="binding site" evidence="1">
    <location>
        <position position="885"/>
    </location>
    <ligand>
        <name>Zn(2+)</name>
        <dbReference type="ChEBI" id="CHEBI:29105"/>
        <label>2</label>
    </ligand>
</feature>
<feature type="binding site" evidence="1">
    <location>
        <position position="892"/>
    </location>
    <ligand>
        <name>Zn(2+)</name>
        <dbReference type="ChEBI" id="CHEBI:29105"/>
        <label>2</label>
    </ligand>
</feature>
<feature type="binding site" evidence="1">
    <location>
        <position position="895"/>
    </location>
    <ligand>
        <name>Zn(2+)</name>
        <dbReference type="ChEBI" id="CHEBI:29105"/>
        <label>2</label>
    </ligand>
</feature>
<organism>
    <name type="scientific">Brucella suis (strain ATCC 23445 / NCTC 10510)</name>
    <dbReference type="NCBI Taxonomy" id="470137"/>
    <lineage>
        <taxon>Bacteria</taxon>
        <taxon>Pseudomonadati</taxon>
        <taxon>Pseudomonadota</taxon>
        <taxon>Alphaproteobacteria</taxon>
        <taxon>Hyphomicrobiales</taxon>
        <taxon>Brucellaceae</taxon>
        <taxon>Brucella/Ochrobactrum group</taxon>
        <taxon>Brucella</taxon>
    </lineage>
</organism>
<reference key="1">
    <citation type="submission" date="2007-12" db="EMBL/GenBank/DDBJ databases">
        <title>Brucella suis ATCC 23445 whole genome shotgun sequencing project.</title>
        <authorList>
            <person name="Setubal J.C."/>
            <person name="Bowns C."/>
            <person name="Boyle S."/>
            <person name="Crasta O.R."/>
            <person name="Czar M.J."/>
            <person name="Dharmanolla C."/>
            <person name="Gillespie J.J."/>
            <person name="Kenyon R.W."/>
            <person name="Lu J."/>
            <person name="Mane S."/>
            <person name="Mohapatra S."/>
            <person name="Nagrani S."/>
            <person name="Purkayastha A."/>
            <person name="Rajasimha H.K."/>
            <person name="Shallom J.M."/>
            <person name="Shallom S."/>
            <person name="Shukla M."/>
            <person name="Snyder E.E."/>
            <person name="Sobral B.W."/>
            <person name="Wattam A.R."/>
            <person name="Will R."/>
            <person name="Williams K."/>
            <person name="Yoo H."/>
            <person name="Bruce D."/>
            <person name="Detter C."/>
            <person name="Munk C."/>
            <person name="Brettin T.S."/>
        </authorList>
    </citation>
    <scope>NUCLEOTIDE SEQUENCE [LARGE SCALE GENOMIC DNA]</scope>
    <source>
        <strain>ATCC 23445 / NCTC 10510</strain>
    </source>
</reference>